<organism>
    <name type="scientific">Potato virus Y (strain Hungarian)</name>
    <name type="common">PVY</name>
    <dbReference type="NCBI Taxonomy" id="31739"/>
    <lineage>
        <taxon>Viruses</taxon>
        <taxon>Riboviria</taxon>
        <taxon>Orthornavirae</taxon>
        <taxon>Pisuviricota</taxon>
        <taxon>Stelpaviricetes</taxon>
        <taxon>Patatavirales</taxon>
        <taxon>Potyviridae</taxon>
        <taxon>Potyvirus</taxon>
        <taxon>Potyvirus yituberosi</taxon>
        <taxon>Potato virus Y</taxon>
    </lineage>
</organism>
<sequence>MATYTSTIQIGSIECKLPYSPAPFGLVAGKREVSTTTDPFASLEMQLSARLRRQEFATIRTSKNGTCMYRYKTDAQIARIQKKREEREREEYNFQMAASSVVSKITIAGGEPPSKLESQVRKGVIHTTPRMRTAKTYRTPKLTEGQMNHLIKQVKQIMSTKGGSVQLISKKSTHVHYKEVLGSHRAVVCTAHMRGLRKRVDFRCDKWTVVRLQHLARTDKWTNQVRATDLRKGDSGVILSNTNLKGHFGRSSEGLFIVRGSHEGKIYDARSKVTQGVMDSMVQFSSAESFWEGLDGNWAQMRYPTDHTCVAGIPVEDCGRVAAIMTHSILPCYKITCPTCAQQYANLPASDLLKILHKHASDGLNRLGADKDRFVHVKKFLTILEHLTEPVDLSLEIFNEVFKSIGEKQQSPFKNLNILNNFFLKGKENTAREWQVAQLSLLELARFQKNRTDNIKKGDISFFRNKLSAKANWNLYLSCDNQLDKNANFLWGQREYHAKRFFSNYFEEIDPAKGYSAYENRLHPNGTRKLAIGNLIVPLDLAEFRRKMKGDYKRQPGVSKKCTSSKDGNYVYPCCCTTLDDGSAVESTFYPPTKKHLVIGNSGDQKYVDLPKGNSEMLYIARQGFCYINIFLAMLINISEEDAKDFTKKVRDMCVPKLGTWPTMMDLATTCAQMKIFYPDVHDAELPRILVDHETQTCHVVDSFGSQTTGYHILKASSVSQLILFANDELESDIKHYRVGGIPNACPELGSTISPFREGGVIMSESAALKLLLKGIFRPKVMRQLLLDEPYLLILSILSPGILMAMYNNGIFELAVKLWINEKQSIAMIASLLSALALRVSAAETLVAQRIIIDTAATDLLDATCDGFNLHLTYPTALMVLQVVKNRNECDDTLFKAGFPSYNTSVVQIMEKNYLNLLNDAWKDLTWREKLSATWYSYRAKRSITRYIKPTGRADLKGLYNISPQAFLGRGAQVVKGTASGLSERFNNYFNTKCVNISSFFIRRIFRRLPTFVTFVNSLLVISMLTSVVAVCQAIILDQRKYRREIELMQIEKNEIVCMELYASLQRKLERDFTWDEYIEYLKSVNPQIVQFAQAQMEEYDVRHQRSTPGVKNLEQVVAFMALVIMVFDAERSDCVFKTLNKFKGVLSSLDHEVRHQSLDDVIKNFDERNETIDFELSEDTIRTSSVLDTKFSDWWDRQIQMGHTLPHYRTEGHFMEFTRATAVQVANDIAHSEHLDFLVRGAVGSGKSTGLPVHLSVAGSVLLIEPTRPLAENVFKQLSSEPFFKKPTLRMRGNSIFGSSPISVMTSGFALHYFANNRSQLAQFNFVIFDECHVLDPSAMAFRSLLSVYHQACKVLKVSATPVGREVEFTTQQPVKLIVEDTLSFQSFVDAQGSKTNADVVQFGSNVLVYVSSYNEVDTLAKLLTDKNMMVTKVDGRTMKHGCLEIVTRGTSARPHFVVATNIIENGVTLDIDVVVDFGLKVSPFLDIDNRSIAYNKVSVSYGERIQRLGRVGRFKKGVALRIGHTEKGIIENPSMIATEAALACFAYNLPVMTGGVSTSLIGNCTVRQVKTMQQFELSPFFIQNFVAHDGSMHPVIHDILKKYKLRDCMTPLCDQSIPYRASSTWLSVSEYERLGVALEIPKQVKIAFHIKEIPPKLHEMLWETVVKYKDVCLFPSIRASSISKIAYTLRTDLFAIPRTLILVERLLEEERVKQSQFRSLIDEGCSSMFSIVNLTNTLRARYAKDYTAENIQKLEKVRSQLKEFSNLDGSACEENLIKRYESLQFVHHQAATSLAKDLKLKGTWKKSLVAKDLIIAGAVAIGGIGLIYSWFTQSVETVSHQGKNKSKRIQALKFRHARDKRAGFEIDNNDDTIEEFFGSAYRKKGKGKGTTVGMGKSSRRFVNMYGFDPTEYSFIQFVDPLTGAQIEENVYADIRDIQERFSDVRKKMVEDDEIELQALGSNTTIHAYFRKDWSDKALKIDLMPHNPLKICDKSNGIAKFPERELELRQTGPAIEVDVKDIPKQEVEHEAKSLMRGLRDFNPIAQTVCRVKVSAEYGTSEMYGFGFGAYIIVNHHLFKSFNGSMEVRSMHGTFRVKNLHSLSVLPIKGRDIIIIKMPKDFPVFPQKLHFRAPVQNERICLVGTNFQEKHASSIITETSTTYNVPGSTFWKHWIETNDGHCGLPVVSTADGCLVGIHSLANNVQTTNYYSAFDEDFESKYLRTNEHNEWTKSWVYNPDTVLWGPLKLKESTPKGLFKTTKLVQDLIDHDVVVEQAKHSAWMYEALTGNLQAVATMKSQLVTKHVVKGECRHFKEFLTVDSEAEAFFRPLMDAYGKSLLNREAYIKDIMKYSKPIDVGIVDCDAFEEAINRVIIYLQVHGFQKCNYITDEQEIFKALNMKAAVGAMYGGKKKDYFEHFTEADKEEIVMQSCPRLYKGSLGIWNGSLKAELRCKEKILANKTRTFTAAPLDTLLGGKVCVDDFNNQFYSKNIECCWTVGMTKFYGGWDRLLRRLPENWVYCDADGSQFDSSLTPYLINAVLIIRSTYMEDWDLGLQMLRNLYTEIIYTPISTPDGTIVKKFRGNNSGQPSTVVDNSLMVVLAMHYALIKECVEFEEIDSTCVFFVNGDDLLIAVNPEKESILDRMSQHFSDLGLNYDFSSRTRRKEELWFMSHRGLLIEGMYVPKLEEERIVSILQWDRADLPEHRLEAICAAMIESWGYSELTHQIRRFYSWLLQQQPFSTIAQEGKAPYIASMALKKLYMNRTVDEEELKAFTEMMVALDDELECDTYEVHHQGNDTIDAGGSTKKDAKQEQGSIQPNLNKEKEKDVNVGTSGTHTVPRIKAITSKMRMPKSKGAAVLNLKHLLEYAPQQIDISNTRATQSQFDTWYEAVQLAYDIGETEMPTVMNGLMVWCIENGTSPNINGVWVMMDGDEQVEYPLKPIVENAKPTLRQIMAHFSDVAEAYIEMRNKKEPYMPRYGLVRNLRDGSLARYAFDFYEVTSRTPVRAREAHIQMKAAALKSAQSRLFGLDGGISTQEENTERHTTEDVSPSMHTLLGVKNM</sequence>
<dbReference type="EC" id="3.4.21.-"/>
<dbReference type="EC" id="3.4.22.45" evidence="2"/>
<dbReference type="EC" id="3.6.4.-"/>
<dbReference type="EC" id="3.4.22.44"/>
<dbReference type="EC" id="2.7.7.48"/>
<dbReference type="EMBL" id="M95491">
    <property type="protein sequence ID" value="AAB59762.1"/>
    <property type="molecule type" value="Genomic_RNA"/>
</dbReference>
<dbReference type="PIR" id="JN0545">
    <property type="entry name" value="JN0545"/>
</dbReference>
<dbReference type="MEROPS" id="C04.002"/>
<dbReference type="Proteomes" id="UP000008616">
    <property type="component" value="Genome"/>
</dbReference>
<dbReference type="GO" id="GO:0019029">
    <property type="term" value="C:helical viral capsid"/>
    <property type="evidence" value="ECO:0007669"/>
    <property type="project" value="UniProtKB-KW"/>
</dbReference>
<dbReference type="GO" id="GO:0044161">
    <property type="term" value="C:host cell cytoplasmic vesicle"/>
    <property type="evidence" value="ECO:0007669"/>
    <property type="project" value="UniProtKB-SubCell"/>
</dbReference>
<dbReference type="GO" id="GO:0042025">
    <property type="term" value="C:host cell nucleus"/>
    <property type="evidence" value="ECO:0007669"/>
    <property type="project" value="UniProtKB-SubCell"/>
</dbReference>
<dbReference type="GO" id="GO:0005524">
    <property type="term" value="F:ATP binding"/>
    <property type="evidence" value="ECO:0007669"/>
    <property type="project" value="UniProtKB-KW"/>
</dbReference>
<dbReference type="GO" id="GO:0004197">
    <property type="term" value="F:cysteine-type endopeptidase activity"/>
    <property type="evidence" value="ECO:0007669"/>
    <property type="project" value="InterPro"/>
</dbReference>
<dbReference type="GO" id="GO:0004386">
    <property type="term" value="F:helicase activity"/>
    <property type="evidence" value="ECO:0007669"/>
    <property type="project" value="UniProtKB-KW"/>
</dbReference>
<dbReference type="GO" id="GO:0016818">
    <property type="term" value="F:hydrolase activity, acting on acid anhydrides, in phosphorus-containing anhydrides"/>
    <property type="evidence" value="ECO:0007669"/>
    <property type="project" value="InterPro"/>
</dbReference>
<dbReference type="GO" id="GO:0003723">
    <property type="term" value="F:RNA binding"/>
    <property type="evidence" value="ECO:0007669"/>
    <property type="project" value="InterPro"/>
</dbReference>
<dbReference type="GO" id="GO:0003968">
    <property type="term" value="F:RNA-directed RNA polymerase activity"/>
    <property type="evidence" value="ECO:0007669"/>
    <property type="project" value="UniProtKB-KW"/>
</dbReference>
<dbReference type="GO" id="GO:0008236">
    <property type="term" value="F:serine-type peptidase activity"/>
    <property type="evidence" value="ECO:0007669"/>
    <property type="project" value="UniProtKB-KW"/>
</dbReference>
<dbReference type="GO" id="GO:0005198">
    <property type="term" value="F:structural molecule activity"/>
    <property type="evidence" value="ECO:0007669"/>
    <property type="project" value="InterPro"/>
</dbReference>
<dbReference type="GO" id="GO:0006351">
    <property type="term" value="P:DNA-templated transcription"/>
    <property type="evidence" value="ECO:0007669"/>
    <property type="project" value="InterPro"/>
</dbReference>
<dbReference type="GO" id="GO:0006508">
    <property type="term" value="P:proteolysis"/>
    <property type="evidence" value="ECO:0007669"/>
    <property type="project" value="UniProtKB-KW"/>
</dbReference>
<dbReference type="GO" id="GO:0052170">
    <property type="term" value="P:symbiont-mediated suppression of host innate immune response"/>
    <property type="evidence" value="ECO:0007669"/>
    <property type="project" value="UniProtKB-KW"/>
</dbReference>
<dbReference type="GO" id="GO:0039694">
    <property type="term" value="P:viral RNA genome replication"/>
    <property type="evidence" value="ECO:0007669"/>
    <property type="project" value="InterPro"/>
</dbReference>
<dbReference type="GO" id="GO:0075523">
    <property type="term" value="P:viral translational frameshifting"/>
    <property type="evidence" value="ECO:0007669"/>
    <property type="project" value="UniProtKB-KW"/>
</dbReference>
<dbReference type="CDD" id="cd23175">
    <property type="entry name" value="ps-ssRNAv_Potyviridae_RdRp"/>
    <property type="match status" value="1"/>
</dbReference>
<dbReference type="Gene3D" id="3.30.70.270">
    <property type="match status" value="1"/>
</dbReference>
<dbReference type="Gene3D" id="3.90.70.150">
    <property type="entry name" value="Helper component proteinase"/>
    <property type="match status" value="1"/>
</dbReference>
<dbReference type="Gene3D" id="3.40.50.300">
    <property type="entry name" value="P-loop containing nucleotide triphosphate hydrolases"/>
    <property type="match status" value="2"/>
</dbReference>
<dbReference type="Gene3D" id="2.40.10.10">
    <property type="entry name" value="Trypsin-like serine proteases"/>
    <property type="match status" value="2"/>
</dbReference>
<dbReference type="InterPro" id="IPR011545">
    <property type="entry name" value="DEAD/DEAH_box_helicase_dom"/>
</dbReference>
<dbReference type="InterPro" id="IPR043502">
    <property type="entry name" value="DNA/RNA_pol_sf"/>
</dbReference>
<dbReference type="InterPro" id="IPR001456">
    <property type="entry name" value="HC-pro"/>
</dbReference>
<dbReference type="InterPro" id="IPR031159">
    <property type="entry name" value="HC_PRO_CPD_dom"/>
</dbReference>
<dbReference type="InterPro" id="IPR042308">
    <property type="entry name" value="HC_PRO_CPD_sf"/>
</dbReference>
<dbReference type="InterPro" id="IPR014001">
    <property type="entry name" value="Helicase_ATP-bd"/>
</dbReference>
<dbReference type="InterPro" id="IPR001650">
    <property type="entry name" value="Helicase_C-like"/>
</dbReference>
<dbReference type="InterPro" id="IPR027417">
    <property type="entry name" value="P-loop_NTPase"/>
</dbReference>
<dbReference type="InterPro" id="IPR002540">
    <property type="entry name" value="Pept_S30_P1_potyvir"/>
</dbReference>
<dbReference type="InterPro" id="IPR009003">
    <property type="entry name" value="Peptidase_S1_PA"/>
</dbReference>
<dbReference type="InterPro" id="IPR043504">
    <property type="entry name" value="Peptidase_S1_PA_chymotrypsin"/>
</dbReference>
<dbReference type="InterPro" id="IPR001592">
    <property type="entry name" value="Poty_coat"/>
</dbReference>
<dbReference type="InterPro" id="IPR001730">
    <property type="entry name" value="Potyv_NIa-pro_dom"/>
</dbReference>
<dbReference type="InterPro" id="IPR039560">
    <property type="entry name" value="Potyvirid-P3"/>
</dbReference>
<dbReference type="InterPro" id="IPR013648">
    <property type="entry name" value="PP_Potyviridae"/>
</dbReference>
<dbReference type="InterPro" id="IPR043128">
    <property type="entry name" value="Rev_trsase/Diguanyl_cyclase"/>
</dbReference>
<dbReference type="InterPro" id="IPR001205">
    <property type="entry name" value="RNA-dir_pol_C"/>
</dbReference>
<dbReference type="InterPro" id="IPR007094">
    <property type="entry name" value="RNA-dir_pol_PSvirus"/>
</dbReference>
<dbReference type="PANTHER" id="PTHR43519">
    <property type="entry name" value="ATP-DEPENDENT RNA HELICASE HRPB"/>
    <property type="match status" value="1"/>
</dbReference>
<dbReference type="PANTHER" id="PTHR43519:SF1">
    <property type="entry name" value="ATP-DEPENDENT RNA HELICASE HRPB"/>
    <property type="match status" value="1"/>
</dbReference>
<dbReference type="Pfam" id="PF00270">
    <property type="entry name" value="DEAD"/>
    <property type="match status" value="1"/>
</dbReference>
<dbReference type="Pfam" id="PF00271">
    <property type="entry name" value="Helicase_C"/>
    <property type="match status" value="1"/>
</dbReference>
<dbReference type="Pfam" id="PF00863">
    <property type="entry name" value="Peptidase_C4"/>
    <property type="match status" value="1"/>
</dbReference>
<dbReference type="Pfam" id="PF00851">
    <property type="entry name" value="Peptidase_C6"/>
    <property type="match status" value="1"/>
</dbReference>
<dbReference type="Pfam" id="PF01577">
    <property type="entry name" value="Peptidase_S30"/>
    <property type="match status" value="1"/>
</dbReference>
<dbReference type="Pfam" id="PF00767">
    <property type="entry name" value="Poty_coat"/>
    <property type="match status" value="1"/>
</dbReference>
<dbReference type="Pfam" id="PF08440">
    <property type="entry name" value="Poty_PP"/>
    <property type="match status" value="1"/>
</dbReference>
<dbReference type="Pfam" id="PF13608">
    <property type="entry name" value="Potyvirid-P3"/>
    <property type="match status" value="1"/>
</dbReference>
<dbReference type="Pfam" id="PF00680">
    <property type="entry name" value="RdRP_1"/>
    <property type="match status" value="1"/>
</dbReference>
<dbReference type="PRINTS" id="PR00966">
    <property type="entry name" value="NIAPOTYPTASE"/>
</dbReference>
<dbReference type="SMART" id="SM00487">
    <property type="entry name" value="DEXDc"/>
    <property type="match status" value="1"/>
</dbReference>
<dbReference type="SMART" id="SM00490">
    <property type="entry name" value="HELICc"/>
    <property type="match status" value="1"/>
</dbReference>
<dbReference type="SUPFAM" id="SSF56672">
    <property type="entry name" value="DNA/RNA polymerases"/>
    <property type="match status" value="1"/>
</dbReference>
<dbReference type="SUPFAM" id="SSF52540">
    <property type="entry name" value="P-loop containing nucleoside triphosphate hydrolases"/>
    <property type="match status" value="2"/>
</dbReference>
<dbReference type="SUPFAM" id="SSF50494">
    <property type="entry name" value="Trypsin-like serine proteases"/>
    <property type="match status" value="1"/>
</dbReference>
<dbReference type="PROSITE" id="PS51744">
    <property type="entry name" value="HC_PRO_CPD"/>
    <property type="match status" value="1"/>
</dbReference>
<dbReference type="PROSITE" id="PS51192">
    <property type="entry name" value="HELICASE_ATP_BIND_1"/>
    <property type="match status" value="1"/>
</dbReference>
<dbReference type="PROSITE" id="PS51194">
    <property type="entry name" value="HELICASE_CTER"/>
    <property type="match status" value="1"/>
</dbReference>
<dbReference type="PROSITE" id="PS51436">
    <property type="entry name" value="POTYVIRUS_NIA_PRO"/>
    <property type="match status" value="1"/>
</dbReference>
<dbReference type="PROSITE" id="PS51871">
    <property type="entry name" value="PV_P1_PRO"/>
    <property type="match status" value="1"/>
</dbReference>
<dbReference type="PROSITE" id="PS50507">
    <property type="entry name" value="RDRP_SSRNA_POS"/>
    <property type="match status" value="1"/>
</dbReference>
<feature type="chain" id="PRO_0000420016" description="Genome polyprotein">
    <location>
        <begin position="1"/>
        <end position="3061"/>
    </location>
</feature>
<feature type="chain" id="PRO_0000040397" description="P1 protease" evidence="9">
    <location>
        <begin position="1"/>
        <end position="284"/>
    </location>
</feature>
<feature type="chain" id="PRO_0000040398" description="Helper component proteinase" evidence="9">
    <location>
        <begin position="285"/>
        <end position="740"/>
    </location>
</feature>
<feature type="chain" id="PRO_0000040399" description="Protein P3" evidence="1">
    <location>
        <begin position="741"/>
        <end position="1105"/>
    </location>
</feature>
<feature type="chain" id="PRO_0000040400" description="6 kDa protein 1" evidence="1">
    <location>
        <begin position="1106"/>
        <end position="1157"/>
    </location>
</feature>
<feature type="chain" id="PRO_0000040401" description="Cytoplasmic inclusion protein" evidence="1">
    <location>
        <begin position="1158"/>
        <end position="1791"/>
    </location>
</feature>
<feature type="chain" id="PRO_0000040402" description="6 kDa protein 2" evidence="1">
    <location>
        <begin position="1792"/>
        <end position="1843"/>
    </location>
</feature>
<feature type="chain" id="PRO_0000040403" description="Viral genome-linked protein" evidence="1">
    <location>
        <begin position="1844"/>
        <end position="2031"/>
    </location>
</feature>
<feature type="chain" id="PRO_0000040404" description="Nuclear inclusion protein A" evidence="1">
    <location>
        <begin position="2032"/>
        <end position="2275"/>
    </location>
</feature>
<feature type="chain" id="PRO_0000040405" description="Nuclear inclusion protein B" evidence="1">
    <location>
        <begin position="2276"/>
        <end position="2794"/>
    </location>
</feature>
<feature type="chain" id="PRO_0000040406" description="Capsid protein" evidence="1">
    <location>
        <begin position="2795"/>
        <end position="3061"/>
    </location>
</feature>
<feature type="domain" description="Peptidase S30" evidence="15">
    <location>
        <begin position="141"/>
        <end position="284"/>
    </location>
</feature>
<feature type="domain" description="Peptidase C6" evidence="14">
    <location>
        <begin position="618"/>
        <end position="740"/>
    </location>
</feature>
<feature type="domain" description="Helicase ATP-binding" evidence="11">
    <location>
        <begin position="1229"/>
        <end position="1381"/>
    </location>
</feature>
<feature type="domain" description="Helicase C-terminal" evidence="12">
    <location>
        <begin position="1400"/>
        <end position="1559"/>
    </location>
</feature>
<feature type="domain" description="Peptidase C4" evidence="13">
    <location>
        <begin position="2032"/>
        <end position="2250"/>
    </location>
</feature>
<feature type="domain" description="RdRp catalytic" evidence="10">
    <location>
        <begin position="2517"/>
        <end position="2641"/>
    </location>
</feature>
<feature type="region of interest" description="Disordered" evidence="16">
    <location>
        <begin position="2795"/>
        <end position="2835"/>
    </location>
</feature>
<feature type="short sequence motif" description="Involved in interaction with stylet and aphid transmission" evidence="1">
    <location>
        <begin position="334"/>
        <end position="337"/>
    </location>
</feature>
<feature type="short sequence motif" description="Involved in virions binding and aphid transmission" evidence="1">
    <location>
        <begin position="592"/>
        <end position="594"/>
    </location>
</feature>
<feature type="short sequence motif" description="DECH box">
    <location>
        <begin position="1331"/>
        <end position="1334"/>
    </location>
</feature>
<feature type="short sequence motif" description="Nuclear localization signal" evidence="9">
    <location>
        <begin position="1884"/>
        <end position="1892"/>
    </location>
</feature>
<feature type="active site" description="For P1 proteinase activity" evidence="15">
    <location>
        <position position="192"/>
    </location>
</feature>
<feature type="active site" description="For P1 proteinase activity" evidence="15">
    <location>
        <position position="201"/>
    </location>
</feature>
<feature type="active site" description="For P1 proteinase activity" evidence="15">
    <location>
        <position position="235"/>
    </location>
</feature>
<feature type="active site" description="For helper component proteinase activity" evidence="14">
    <location>
        <position position="626"/>
    </location>
</feature>
<feature type="active site" description="For helper component proteinase activity" evidence="14">
    <location>
        <position position="699"/>
    </location>
</feature>
<feature type="active site" description="For nuclear inclusion protein A activity" evidence="13">
    <location>
        <position position="2077"/>
    </location>
</feature>
<feature type="active site" description="For nuclear inclusion protein A activity" evidence="13">
    <location>
        <position position="2112"/>
    </location>
</feature>
<feature type="active site" description="For nuclear inclusion protein A activity" evidence="13">
    <location>
        <position position="2182"/>
    </location>
</feature>
<feature type="binding site" evidence="11">
    <location>
        <begin position="1242"/>
        <end position="1249"/>
    </location>
    <ligand>
        <name>ATP</name>
        <dbReference type="ChEBI" id="CHEBI:30616"/>
    </ligand>
</feature>
<feature type="site" description="Cleavage; by P1 proteinase" evidence="15">
    <location>
        <begin position="284"/>
        <end position="285"/>
    </location>
</feature>
<feature type="site" description="Cleavage; by autolysis" evidence="14">
    <location>
        <begin position="740"/>
        <end position="741"/>
    </location>
</feature>
<feature type="site" description="Cleavage; by NIa-pro" evidence="6">
    <location>
        <begin position="1105"/>
        <end position="1106"/>
    </location>
</feature>
<feature type="site" description="Cleavage; by NIa-pro" evidence="6">
    <location>
        <begin position="1157"/>
        <end position="1158"/>
    </location>
</feature>
<feature type="site" description="Cleavage; by NIa-pro" evidence="6">
    <location>
        <begin position="1791"/>
        <end position="1792"/>
    </location>
</feature>
<feature type="site" description="Cleavage; by NIa-pro" evidence="6">
    <location>
        <begin position="1843"/>
        <end position="1844"/>
    </location>
</feature>
<feature type="site" description="Cleavage; by NIa-pro" evidence="6">
    <location>
        <begin position="2031"/>
        <end position="2032"/>
    </location>
</feature>
<feature type="site" description="Cleavage; by NIa-pro" evidence="6">
    <location>
        <begin position="2275"/>
        <end position="2276"/>
    </location>
</feature>
<feature type="site" description="Cleavage; by NIa-pro" evidence="6">
    <location>
        <begin position="2794"/>
        <end position="2795"/>
    </location>
</feature>
<feature type="modified residue" description="O-(5'-phospho-RNA)-tyrosine" evidence="3">
    <location>
        <position position="1907"/>
    </location>
</feature>
<feature type="modified residue" description="Phosphothreonine" evidence="5">
    <location>
        <position position="3044"/>
    </location>
</feature>
<name>POLG_PVYHU</name>
<evidence type="ECO:0000250" key="1"/>
<evidence type="ECO:0000250" key="2">
    <source>
        <dbReference type="UniProtKB" id="P04517"/>
    </source>
</evidence>
<evidence type="ECO:0000250" key="3">
    <source>
        <dbReference type="UniProtKB" id="P09814"/>
    </source>
</evidence>
<evidence type="ECO:0000250" key="4">
    <source>
        <dbReference type="UniProtKB" id="P13529"/>
    </source>
</evidence>
<evidence type="ECO:0000250" key="5">
    <source>
        <dbReference type="UniProtKB" id="P17767"/>
    </source>
</evidence>
<evidence type="ECO:0000250" key="6">
    <source>
        <dbReference type="UniProtKB" id="P18247"/>
    </source>
</evidence>
<evidence type="ECO:0000250" key="7">
    <source>
        <dbReference type="UniProtKB" id="P21231"/>
    </source>
</evidence>
<evidence type="ECO:0000250" key="8">
    <source>
        <dbReference type="UniProtKB" id="P89509"/>
    </source>
</evidence>
<evidence type="ECO:0000255" key="9"/>
<evidence type="ECO:0000255" key="10">
    <source>
        <dbReference type="PROSITE-ProRule" id="PRU00539"/>
    </source>
</evidence>
<evidence type="ECO:0000255" key="11">
    <source>
        <dbReference type="PROSITE-ProRule" id="PRU00541"/>
    </source>
</evidence>
<evidence type="ECO:0000255" key="12">
    <source>
        <dbReference type="PROSITE-ProRule" id="PRU00542"/>
    </source>
</evidence>
<evidence type="ECO:0000255" key="13">
    <source>
        <dbReference type="PROSITE-ProRule" id="PRU00766"/>
    </source>
</evidence>
<evidence type="ECO:0000255" key="14">
    <source>
        <dbReference type="PROSITE-ProRule" id="PRU01080"/>
    </source>
</evidence>
<evidence type="ECO:0000255" key="15">
    <source>
        <dbReference type="PROSITE-ProRule" id="PRU01219"/>
    </source>
</evidence>
<evidence type="ECO:0000256" key="16">
    <source>
        <dbReference type="SAM" id="MobiDB-lite"/>
    </source>
</evidence>
<evidence type="ECO:0000305" key="17"/>
<proteinExistence type="inferred from homology"/>
<keyword id="KW-0067">ATP-binding</keyword>
<keyword id="KW-0167">Capsid protein</keyword>
<keyword id="KW-0191">Covalent protein-RNA linkage</keyword>
<keyword id="KW-1139">Helical capsid protein</keyword>
<keyword id="KW-0347">Helicase</keyword>
<keyword id="KW-1036">Host cytoplasmic vesicle</keyword>
<keyword id="KW-1048">Host nucleus</keyword>
<keyword id="KW-0945">Host-virus interaction</keyword>
<keyword id="KW-0378">Hydrolase</keyword>
<keyword id="KW-1090">Inhibition of host innate immune response by virus</keyword>
<keyword id="KW-0547">Nucleotide-binding</keyword>
<keyword id="KW-0548">Nucleotidyltransferase</keyword>
<keyword id="KW-0597">Phosphoprotein</keyword>
<keyword id="KW-0645">Protease</keyword>
<keyword id="KW-0688">Ribosomal frameshifting</keyword>
<keyword id="KW-0696">RNA-directed RNA polymerase</keyword>
<keyword id="KW-0720">Serine protease</keyword>
<keyword id="KW-0941">Suppressor of RNA silencing</keyword>
<keyword id="KW-0788">Thiol protease</keyword>
<keyword id="KW-0808">Transferase</keyword>
<keyword id="KW-0899">Viral immunoevasion</keyword>
<keyword id="KW-0693">Viral RNA replication</keyword>
<keyword id="KW-0946">Virion</keyword>
<protein>
    <recommendedName>
        <fullName>Genome polyprotein</fullName>
    </recommendedName>
    <component>
        <recommendedName>
            <fullName>P1 protease</fullName>
            <ecNumber>3.4.21.-</ecNumber>
        </recommendedName>
        <alternativeName>
            <fullName>Leader protease P1</fullName>
        </alternativeName>
        <alternativeName>
            <fullName>N-terminal protein</fullName>
        </alternativeName>
        <alternativeName>
            <fullName>P1 proteinase</fullName>
        </alternativeName>
    </component>
    <component>
        <recommendedName>
            <fullName>Helper component proteinase</fullName>
            <shortName>HC-pro</shortName>
            <ecNumber evidence="2">3.4.22.45</ecNumber>
        </recommendedName>
    </component>
    <component>
        <recommendedName>
            <fullName>Protein P3</fullName>
        </recommendedName>
    </component>
    <component>
        <recommendedName>
            <fullName>6 kDa protein 1</fullName>
            <shortName>6K1</shortName>
        </recommendedName>
    </component>
    <component>
        <recommendedName>
            <fullName>Cytoplasmic inclusion protein</fullName>
            <shortName>CI</shortName>
            <ecNumber>3.6.4.-</ecNumber>
        </recommendedName>
    </component>
    <component>
        <recommendedName>
            <fullName>6 kDa protein 2</fullName>
            <shortName>6K2</shortName>
        </recommendedName>
    </component>
    <component>
        <recommendedName>
            <fullName>Viral genome-linked protein</fullName>
        </recommendedName>
        <alternativeName>
            <fullName>VPg</fullName>
        </alternativeName>
    </component>
    <component>
        <recommendedName>
            <fullName>Nuclear inclusion protein A</fullName>
            <shortName>NI-a</shortName>
            <shortName>NIa</shortName>
            <ecNumber>3.4.22.44</ecNumber>
        </recommendedName>
        <alternativeName>
            <fullName>49 kDa proteinase</fullName>
            <shortName>49 kDa-Pro</shortName>
        </alternativeName>
        <alternativeName>
            <fullName>NIa-pro</fullName>
        </alternativeName>
    </component>
    <component>
        <recommendedName>
            <fullName>Nuclear inclusion protein B</fullName>
            <shortName>NI-b</shortName>
            <shortName>NIb</shortName>
            <ecNumber>2.7.7.48</ecNumber>
        </recommendedName>
        <alternativeName>
            <fullName>RNA-directed RNA polymerase</fullName>
        </alternativeName>
    </component>
    <component>
        <recommendedName>
            <fullName>Capsid protein</fullName>
            <shortName>CP</shortName>
        </recommendedName>
        <alternativeName>
            <fullName>Coat protein</fullName>
        </alternativeName>
    </component>
</protein>
<accession>Q02963</accession>
<organismHost>
    <name type="scientific">Capsicum</name>
    <name type="common">peppers</name>
    <dbReference type="NCBI Taxonomy" id="4071"/>
</organismHost>
<organismHost>
    <name type="scientific">Nicotiana</name>
    <dbReference type="NCBI Taxonomy" id="4085"/>
</organismHost>
<organismHost>
    <name type="scientific">Solanum lycopersicum</name>
    <name type="common">Tomato</name>
    <name type="synonym">Lycopersicon esculentum</name>
    <dbReference type="NCBI Taxonomy" id="4081"/>
</organismHost>
<organismHost>
    <name type="scientific">Solanum tuberosum</name>
    <name type="common">Potato</name>
    <dbReference type="NCBI Taxonomy" id="4113"/>
</organismHost>
<reference key="1">
    <citation type="journal article" date="1993" name="Gene">
        <title>Cloning and sequencing of potato virus Y (Hungarian isolate) genomic RNA.</title>
        <authorList>
            <person name="Thole V."/>
            <person name="Dalmay T."/>
            <person name="Burgyan J."/>
            <person name="Balazs E."/>
        </authorList>
    </citation>
    <scope>NUCLEOTIDE SEQUENCE [GENOMIC RNA]</scope>
</reference>
<reference key="2">
    <citation type="journal article" date="2001" name="Virus Res.">
        <title>Potyvirus proteins: a wealth of functions.</title>
        <authorList>
            <person name="Urcuqui-Inchima S."/>
            <person name="Haenni A.L."/>
            <person name="Bernardi F."/>
        </authorList>
    </citation>
    <scope>REVIEW</scope>
</reference>
<comment type="function">
    <molecule>Helper component proteinase</molecule>
    <text evidence="2">Required for aphid transmission and also has proteolytic activity. Only cleaves a Gly-Gly dipeptide at its own C-terminus. Interacts with virions and aphid stylets. Acts as a suppressor of RNA-mediated gene silencing, also known as post-transcriptional gene silencing (PTGS), a mechanism of plant viral defense that limits the accumulation of viral RNAs. May have RNA-binding activity.</text>
</comment>
<comment type="function">
    <molecule>Cytoplasmic inclusion protein</molecule>
    <text>Has helicase activity. It may be involved in replication.</text>
</comment>
<comment type="function">
    <molecule>6 kDa protein 1</molecule>
    <text evidence="4 8">Indispensable for virus replication (By similarity). Reduces the abundance of host transcripts related to jasmonic acid biosynthesis therefore altering the host defenses (By similarity). In order to increase its own stability, decreases host protein degradation pathways (By similarity).</text>
</comment>
<comment type="function">
    <molecule>6 kDa protein 2</molecule>
    <text evidence="3">Indispensable for virus replication.</text>
</comment>
<comment type="function">
    <molecule>Viral genome-linked protein</molecule>
    <text evidence="6">Mediates the cap-independent, EIF4E-dependent translation of viral genomic RNAs (By similarity). Binds to the cap-binding site of host EIF4E and thus interferes with the host EIF4E-dependent mRNA export and translation (By similarity). VPg-RNA directly binds EIF4E and is a template for transcription (By similarity). Also forms trimeric complexes with EIF4E-EIF4G, which are templates for translation (By similarity).</text>
</comment>
<comment type="function">
    <molecule>Nuclear inclusion protein A</molecule>
    <text evidence="2">Has RNA-binding and proteolytic activities.</text>
</comment>
<comment type="function">
    <molecule>Nuclear inclusion protein B</molecule>
    <text>An RNA-dependent RNA polymerase that plays an essential role in the virus replication.</text>
</comment>
<comment type="function">
    <molecule>Capsid protein</molecule>
    <text evidence="2">Involved in aphid transmission, cell-to-cell and systemis movement, encapsidation of the viral RNA and in the regulation of viral RNA amplification.</text>
</comment>
<comment type="catalytic activity">
    <molecule>Nuclear inclusion protein B</molecule>
    <reaction evidence="10">
        <text>RNA(n) + a ribonucleoside 5'-triphosphate = RNA(n+1) + diphosphate</text>
        <dbReference type="Rhea" id="RHEA:21248"/>
        <dbReference type="Rhea" id="RHEA-COMP:14527"/>
        <dbReference type="Rhea" id="RHEA-COMP:17342"/>
        <dbReference type="ChEBI" id="CHEBI:33019"/>
        <dbReference type="ChEBI" id="CHEBI:61557"/>
        <dbReference type="ChEBI" id="CHEBI:140395"/>
        <dbReference type="EC" id="2.7.7.48"/>
    </reaction>
</comment>
<comment type="catalytic activity">
    <molecule>Nuclear inclusion protein A</molecule>
    <reaction evidence="2">
        <text>Hydrolyzes glutaminyl bonds, and activity is further restricted by preferences for the amino acids in P6 - P1' that vary with the species of potyvirus, e.g. Glu-Xaa-Xaa-Tyr-Xaa-Gln-|-(Ser or Gly) for the enzyme from tobacco etch virus. The natural substrate is the viral polyprotein, but other proteins and oligopeptides containing the appropriate consensus sequence are also cleaved.</text>
        <dbReference type="EC" id="3.4.22.44"/>
    </reaction>
</comment>
<comment type="catalytic activity">
    <molecule>Helper component proteinase</molecule>
    <reaction evidence="2">
        <text>Hydrolyzes a Gly-|-Gly bond at its own C-terminus, commonly in the sequence -Tyr-Xaa-Val-Gly-|-Gly, in the processing of the potyviral polyprotein.</text>
        <dbReference type="EC" id="3.4.22.45"/>
    </reaction>
</comment>
<comment type="subunit">
    <molecule>Viral genome-linked protein</molecule>
    <text evidence="6">Interacts with host eIF4E protein (via cap-binding region); this interaction mediates the translation of the VPg-viral RNA conjugates (By similarity). Part of a complex that comprises VPg, RNA, host EIF4E and EIF4G; this interaction mediates the translation of the VPg-viral RNA conjugates (By similarity).</text>
</comment>
<comment type="subcellular location">
    <molecule>6 kDa protein 1</molecule>
    <subcellularLocation>
        <location>Host cytoplasmic vesicle</location>
    </subcellularLocation>
    <text evidence="4">Probably colocalizes with 6K2-induced vesicles associated with host chloroplasts.</text>
</comment>
<comment type="subcellular location">
    <molecule>6 kDa protein 2</molecule>
    <subcellularLocation>
        <location evidence="3">Host cytoplasmic vesicle</location>
    </subcellularLocation>
    <text evidence="3">6K-induced vesicles associate with host chloroplasts.</text>
</comment>
<comment type="subcellular location">
    <molecule>Viral genome-linked protein</molecule>
    <subcellularLocation>
        <location evidence="7">Host nucleus</location>
    </subcellularLocation>
    <text evidence="7">Binds to host plant eIF4E proteins in the host nucleus.</text>
</comment>
<comment type="subcellular location">
    <molecule>Capsid protein</molecule>
    <subcellularLocation>
        <location evidence="17">Virion</location>
    </subcellularLocation>
</comment>
<comment type="alternative products">
    <event type="ribosomal frameshifting"/>
    <isoform>
        <id>Q02963-1</id>
        <name>Genome polyprotein</name>
        <sequence type="displayed"/>
    </isoform>
    <isoform>
        <id>P0CK06-1</id>
        <name>P3N-PIPO polyprotein</name>
        <sequence type="external"/>
    </isoform>
</comment>
<comment type="domain">
    <molecule>Helper component proteinase</molecule>
    <text>The N-terminus is involved in interaction with stylets. The central part is involved in interaction with virions and the C-terminus is involved in cell-to cell movement of the virus.</text>
</comment>
<comment type="PTM">
    <molecule>Viral genome-linked protein</molecule>
    <text evidence="3">VPg is uridylylated by the polymerase and is covalently attached to the 5'-end of the genomic RNA. This uridylylated form acts as a nucleotide-peptide primer for the polymerase (By similarity).</text>
</comment>
<comment type="PTM">
    <molecule>Genome polyprotein</molecule>
    <text evidence="1">Potyviral RNA is expressed as two polyproteins which undergo post-translational proteolytic processing. Genome polyprotein is processed by NIa-pro, P1 and HC-pro proteinases resulting in the production of at least ten individual proteins. P3N-PIPO polyprotein is cleaved by P1 and HC-pro proteinases resulting in the production of three individual proteins. The P1 proteinase and the HC-pro cleave only their respective C-termini autocatalytically. 6K1 is essential for proper proteolytic separation of P3 from CI (By similarity).</text>
</comment>
<comment type="miscellaneous">
    <molecule>Isoform Genome polyprotein</molecule>
    <text>Produced by conventional translation.</text>
</comment>
<comment type="similarity">
    <text evidence="17">Belongs to the potyviridae genome polyprotein family.</text>
</comment>